<comment type="function">
    <text evidence="1">May be involved in several stages of intracellular trafficking.</text>
</comment>
<comment type="subcellular location">
    <subcellularLocation>
        <location evidence="1">Cytoplasmic vesicle membrane</location>
        <topology evidence="1">Peripheral membrane protein</topology>
        <orientation evidence="1">Cytoplasmic side</orientation>
    </subcellularLocation>
</comment>
<comment type="domain">
    <text evidence="1">The PX domain mediates specific binding to membranes enriched in phosphatidylinositol 3-phosphate (PtdIns(P3)).</text>
</comment>
<comment type="similarity">
    <text evidence="5">Belongs to the sorting nexin family.</text>
</comment>
<feature type="chain" id="PRO_0000213874" description="Sorting nexin-24">
    <location>
        <begin position="1"/>
        <end position="169"/>
    </location>
</feature>
<feature type="domain" description="PX" evidence="4">
    <location>
        <begin position="1"/>
        <end position="125"/>
    </location>
</feature>
<feature type="binding site" evidence="1">
    <location>
        <position position="38"/>
    </location>
    <ligand>
        <name>a 1,2-diacyl-sn-glycero-3-phospho-(1D-myo-inositol-3-phosphate)</name>
        <dbReference type="ChEBI" id="CHEBI:58088"/>
    </ligand>
</feature>
<feature type="binding site" evidence="1">
    <location>
        <position position="40"/>
    </location>
    <ligand>
        <name>a 1,2-diacyl-sn-glycero-3-phospho-(1D-myo-inositol-3-phosphate)</name>
        <dbReference type="ChEBI" id="CHEBI:58088"/>
    </ligand>
</feature>
<feature type="binding site" evidence="1">
    <location>
        <position position="61"/>
    </location>
    <ligand>
        <name>a 1,2-diacyl-sn-glycero-3-phospho-(1D-myo-inositol-3-phosphate)</name>
        <dbReference type="ChEBI" id="CHEBI:58088"/>
    </ligand>
</feature>
<feature type="binding site" evidence="1">
    <location>
        <position position="74"/>
    </location>
    <ligand>
        <name>a 1,2-diacyl-sn-glycero-3-phospho-(1D-myo-inositol-3-phosphate)</name>
        <dbReference type="ChEBI" id="CHEBI:58088"/>
    </ligand>
</feature>
<feature type="modified residue" description="N-acetylmethionine" evidence="3">
    <location>
        <position position="1"/>
    </location>
</feature>
<feature type="modified residue" description="Phosphoserine" evidence="2">
    <location>
        <position position="113"/>
    </location>
</feature>
<feature type="modified residue" description="Phosphoserine" evidence="2">
    <location>
        <position position="116"/>
    </location>
</feature>
<name>SNX24_RAT</name>
<gene>
    <name type="primary">Snx24</name>
</gene>
<keyword id="KW-0007">Acetylation</keyword>
<keyword id="KW-0968">Cytoplasmic vesicle</keyword>
<keyword id="KW-0446">Lipid-binding</keyword>
<keyword id="KW-0472">Membrane</keyword>
<keyword id="KW-0597">Phosphoprotein</keyword>
<keyword id="KW-0653">Protein transport</keyword>
<keyword id="KW-1185">Reference proteome</keyword>
<keyword id="KW-0813">Transport</keyword>
<accession>Q5U2S5</accession>
<evidence type="ECO:0000250" key="1"/>
<evidence type="ECO:0000250" key="2">
    <source>
        <dbReference type="UniProtKB" id="Q9CRB0"/>
    </source>
</evidence>
<evidence type="ECO:0000250" key="3">
    <source>
        <dbReference type="UniProtKB" id="Q9Y343"/>
    </source>
</evidence>
<evidence type="ECO:0000255" key="4">
    <source>
        <dbReference type="PROSITE-ProRule" id="PRU00147"/>
    </source>
</evidence>
<evidence type="ECO:0000305" key="5"/>
<proteinExistence type="evidence at transcript level"/>
<organism>
    <name type="scientific">Rattus norvegicus</name>
    <name type="common">Rat</name>
    <dbReference type="NCBI Taxonomy" id="10116"/>
    <lineage>
        <taxon>Eukaryota</taxon>
        <taxon>Metazoa</taxon>
        <taxon>Chordata</taxon>
        <taxon>Craniata</taxon>
        <taxon>Vertebrata</taxon>
        <taxon>Euteleostomi</taxon>
        <taxon>Mammalia</taxon>
        <taxon>Eutheria</taxon>
        <taxon>Euarchontoglires</taxon>
        <taxon>Glires</taxon>
        <taxon>Rodentia</taxon>
        <taxon>Myomorpha</taxon>
        <taxon>Muroidea</taxon>
        <taxon>Muridae</taxon>
        <taxon>Murinae</taxon>
        <taxon>Rattus</taxon>
    </lineage>
</organism>
<sequence>MEVYIPSFRHEDSDLERGYTVFKIEVLMNGRKHFVEKRYSEFHALHKKLKKCIKTPEIPSKHVRNWVPKVLEQRRQGLETYLQAVILENEELPKLFLDFLNVRHLPSLPKAESCGSFDETESEESSKLSHQPVLLFLGDPYVLPAASDFPNVVIEGVLHGIFFSHLQPR</sequence>
<reference key="1">
    <citation type="journal article" date="2004" name="Genome Res.">
        <title>The status, quality, and expansion of the NIH full-length cDNA project: the Mammalian Gene Collection (MGC).</title>
        <authorList>
            <consortium name="The MGC Project Team"/>
        </authorList>
    </citation>
    <scope>NUCLEOTIDE SEQUENCE [LARGE SCALE MRNA]</scope>
    <source>
        <tissue>Heart</tissue>
    </source>
</reference>
<dbReference type="EMBL" id="BC085883">
    <property type="protein sequence ID" value="AAH85883.1"/>
    <property type="molecule type" value="mRNA"/>
</dbReference>
<dbReference type="RefSeq" id="NP_001008365.1">
    <property type="nucleotide sequence ID" value="NM_001008364.1"/>
</dbReference>
<dbReference type="SMR" id="Q5U2S5"/>
<dbReference type="FunCoup" id="Q5U2S5">
    <property type="interactions" value="274"/>
</dbReference>
<dbReference type="STRING" id="10116.ENSRNOP00000023507"/>
<dbReference type="iPTMnet" id="Q5U2S5"/>
<dbReference type="PhosphoSitePlus" id="Q5U2S5"/>
<dbReference type="PaxDb" id="10116-ENSRNOP00000023507"/>
<dbReference type="Ensembl" id="ENSRNOT00000023507.5">
    <property type="protein sequence ID" value="ENSRNOP00000023507.4"/>
    <property type="gene ID" value="ENSRNOG00000017488.5"/>
</dbReference>
<dbReference type="GeneID" id="361328"/>
<dbReference type="KEGG" id="rno:361328"/>
<dbReference type="UCSC" id="RGD:1306864">
    <property type="organism name" value="rat"/>
</dbReference>
<dbReference type="AGR" id="RGD:1306864"/>
<dbReference type="CTD" id="28966"/>
<dbReference type="RGD" id="1306864">
    <property type="gene designation" value="Snx24"/>
</dbReference>
<dbReference type="eggNOG" id="KOG2101">
    <property type="taxonomic scope" value="Eukaryota"/>
</dbReference>
<dbReference type="GeneTree" id="ENSGT00390000001280"/>
<dbReference type="HOGENOM" id="CLU_117250_1_0_1"/>
<dbReference type="InParanoid" id="Q5U2S5"/>
<dbReference type="OrthoDB" id="39175at9989"/>
<dbReference type="PhylomeDB" id="Q5U2S5"/>
<dbReference type="TreeFam" id="TF332414"/>
<dbReference type="PRO" id="PR:Q5U2S5"/>
<dbReference type="Proteomes" id="UP000002494">
    <property type="component" value="Chromosome 18"/>
</dbReference>
<dbReference type="Bgee" id="ENSRNOG00000017488">
    <property type="expression patterns" value="Expressed in liver and 18 other cell types or tissues"/>
</dbReference>
<dbReference type="GO" id="GO:0030659">
    <property type="term" value="C:cytoplasmic vesicle membrane"/>
    <property type="evidence" value="ECO:0007669"/>
    <property type="project" value="UniProtKB-SubCell"/>
</dbReference>
<dbReference type="GO" id="GO:1901981">
    <property type="term" value="F:phosphatidylinositol phosphate binding"/>
    <property type="evidence" value="ECO:0000318"/>
    <property type="project" value="GO_Central"/>
</dbReference>
<dbReference type="GO" id="GO:0032266">
    <property type="term" value="F:phosphatidylinositol-3-phosphate binding"/>
    <property type="evidence" value="ECO:0000266"/>
    <property type="project" value="RGD"/>
</dbReference>
<dbReference type="GO" id="GO:0070273">
    <property type="term" value="F:phosphatidylinositol-4-phosphate binding"/>
    <property type="evidence" value="ECO:0000266"/>
    <property type="project" value="RGD"/>
</dbReference>
<dbReference type="GO" id="GO:0010314">
    <property type="term" value="F:phosphatidylinositol-5-phosphate binding"/>
    <property type="evidence" value="ECO:0000266"/>
    <property type="project" value="RGD"/>
</dbReference>
<dbReference type="GO" id="GO:0015031">
    <property type="term" value="P:protein transport"/>
    <property type="evidence" value="ECO:0007669"/>
    <property type="project" value="UniProtKB-KW"/>
</dbReference>
<dbReference type="CDD" id="cd06880">
    <property type="entry name" value="PX_SNX22"/>
    <property type="match status" value="1"/>
</dbReference>
<dbReference type="FunFam" id="3.30.1520.10:FF:000038">
    <property type="entry name" value="sorting nexin-24"/>
    <property type="match status" value="1"/>
</dbReference>
<dbReference type="Gene3D" id="3.30.1520.10">
    <property type="entry name" value="Phox-like domain"/>
    <property type="match status" value="1"/>
</dbReference>
<dbReference type="InterPro" id="IPR001683">
    <property type="entry name" value="PX_dom"/>
</dbReference>
<dbReference type="InterPro" id="IPR036871">
    <property type="entry name" value="PX_dom_sf"/>
</dbReference>
<dbReference type="InterPro" id="IPR052467">
    <property type="entry name" value="Sorting_nexin_PX-domain"/>
</dbReference>
<dbReference type="PANTHER" id="PTHR15813">
    <property type="entry name" value="SORTING NEXIN-22 AND 24"/>
    <property type="match status" value="1"/>
</dbReference>
<dbReference type="PANTHER" id="PTHR15813:SF10">
    <property type="entry name" value="SORTING NEXIN-24"/>
    <property type="match status" value="1"/>
</dbReference>
<dbReference type="Pfam" id="PF00787">
    <property type="entry name" value="PX"/>
    <property type="match status" value="1"/>
</dbReference>
<dbReference type="SMART" id="SM00312">
    <property type="entry name" value="PX"/>
    <property type="match status" value="1"/>
</dbReference>
<dbReference type="SUPFAM" id="SSF64268">
    <property type="entry name" value="PX domain"/>
    <property type="match status" value="1"/>
</dbReference>
<dbReference type="PROSITE" id="PS50195">
    <property type="entry name" value="PX"/>
    <property type="match status" value="1"/>
</dbReference>
<protein>
    <recommendedName>
        <fullName>Sorting nexin-24</fullName>
    </recommendedName>
</protein>